<sequence>METETEHDRTVSVDDNDSLVPEPSSTKESFFEDLSLTGQVMNPQLSSAGEVLTKVELDFAFVSEKLVNLSLLTMQLGTRENDFESFVSKKEEDEEEPSSNVDDDDDSAEKALEFDLLSSILNSEVKELESLLGFLQNEIQSARVMISPFQHDGEAFLDLEGKLNDTEQSLGQLMEQVVEMKKQSSNFQRLSSGLDEQGSWSGGQTSVSQNDGEFGDLSAKINMQTADQQRNVLRMLEKSLAKEMELEKKLSESRNTERELEMKLYSSEQDVVYMEEVTEDAFSRWLEADNAAEVFKGTSKEMSGKLQILQFNLSGSFKREDNLKSKLVDSKERLEAKECALHKLDSSNARLADFLVAQTEGLKESLQEAEEKLILLNTENSTLSEKVSSLEEQLNEYGIQTEDADATSGALITDLERINEELKDKLAKTEARAEETESKCKILEESKKELQDELGNFRDKGFTIHKLASLEKHLRDSDLQLEHAVAAVEASKEKQNLLYSTVSDMEDVIEDLKSKVLKAENRADITEEKLIMVSESNAEVNEELKFFKGRLKEGEKYLQQAEERKLRTAKDIGVHNKIMKKLVMQLAAERERLHKQITNLSRENCVLMVKLKKVGKTGYMESGNGSEVSPKSDQNASSCHQGSRLQATFISLTNPEEEETGSKSDIGSVRRLDVGALRFKHILVAILVILISSIAYVISQQNM</sequence>
<gene>
    <name type="primary">WIT1</name>
    <name type="ordered locus">At5g11390</name>
    <name type="ORF">F2I11.280</name>
</gene>
<comment type="function">
    <text evidence="3">Together with WIT2, required for the nuclear envelope docking of RANGAP proteins in root tips.</text>
</comment>
<comment type="subunit">
    <text evidence="3 4 5 6">Homodimer. Component of Ran complexes at least composed of WIT1 or WIT2, RANGAP1 or RANGAP2, and WIP1 or WIP2 or WIP3. Interacts with WIP2, WPP1/MAF1, WPP2/MAF2, RANGAP1 and RANGAP2. Component of a ternary complex composed of WPP1, HSP70-1 and WIT1. Interacts with KAKU1 (PubMed:23973298, PubMed:25759303). Interacts with WIP1 (PubMed:23973298).</text>
</comment>
<comment type="interaction">
    <interactant intactId="EBI-1796628">
        <id>Q8L7E5</id>
    </interactant>
    <interactant intactId="EBI-1779351">
        <id>Q9LE82</id>
        <label>RANGAP1</label>
    </interactant>
    <organismsDiffer>false</organismsDiffer>
    <experiments>5</experiments>
</comment>
<comment type="interaction">
    <interactant intactId="EBI-1796628">
        <id>Q8L7E5</id>
    </interactant>
    <interactant intactId="EBI-1779367">
        <id>Q8GXA4</id>
        <label>WIP1</label>
    </interactant>
    <organismsDiffer>false</organismsDiffer>
    <experiments>4</experiments>
</comment>
<comment type="interaction">
    <interactant intactId="EBI-1796628">
        <id>Q8L7E5</id>
    </interactant>
    <interactant intactId="EBI-1954306">
        <id>Q9FH18-1</id>
        <label>WIP2</label>
    </interactant>
    <organismsDiffer>false</organismsDiffer>
    <experiments>2</experiments>
</comment>
<comment type="subcellular location">
    <subcellularLocation>
        <location>Nucleus envelope</location>
    </subcellularLocation>
    <subcellularLocation>
        <location>Nucleus membrane</location>
        <topology>Single-pass membrane protein</topology>
    </subcellularLocation>
    <text>During cytokinesis, aggregates around nuclear pores at the cell plate.</text>
</comment>
<comment type="tissue specificity">
    <text evidence="3">Ubiquitous.</text>
</comment>
<comment type="sequence caution" evidence="7">
    <conflict type="erroneous gene model prediction">
        <sequence resource="EMBL-CDS" id="CAB96674"/>
    </conflict>
</comment>
<organism>
    <name type="scientific">Arabidopsis thaliana</name>
    <name type="common">Mouse-ear cress</name>
    <dbReference type="NCBI Taxonomy" id="3702"/>
    <lineage>
        <taxon>Eukaryota</taxon>
        <taxon>Viridiplantae</taxon>
        <taxon>Streptophyta</taxon>
        <taxon>Embryophyta</taxon>
        <taxon>Tracheophyta</taxon>
        <taxon>Spermatophyta</taxon>
        <taxon>Magnoliopsida</taxon>
        <taxon>eudicotyledons</taxon>
        <taxon>Gunneridae</taxon>
        <taxon>Pentapetalae</taxon>
        <taxon>rosids</taxon>
        <taxon>malvids</taxon>
        <taxon>Brassicales</taxon>
        <taxon>Brassicaceae</taxon>
        <taxon>Camelineae</taxon>
        <taxon>Arabidopsis</taxon>
    </lineage>
</organism>
<reference key="1">
    <citation type="journal article" date="2000" name="Nature">
        <title>Sequence and analysis of chromosome 5 of the plant Arabidopsis thaliana.</title>
        <authorList>
            <person name="Tabata S."/>
            <person name="Kaneko T."/>
            <person name="Nakamura Y."/>
            <person name="Kotani H."/>
            <person name="Kato T."/>
            <person name="Asamizu E."/>
            <person name="Miyajima N."/>
            <person name="Sasamoto S."/>
            <person name="Kimura T."/>
            <person name="Hosouchi T."/>
            <person name="Kawashima K."/>
            <person name="Kohara M."/>
            <person name="Matsumoto M."/>
            <person name="Matsuno A."/>
            <person name="Muraki A."/>
            <person name="Nakayama S."/>
            <person name="Nakazaki N."/>
            <person name="Naruo K."/>
            <person name="Okumura S."/>
            <person name="Shinpo S."/>
            <person name="Takeuchi C."/>
            <person name="Wada T."/>
            <person name="Watanabe A."/>
            <person name="Yamada M."/>
            <person name="Yasuda M."/>
            <person name="Sato S."/>
            <person name="de la Bastide M."/>
            <person name="Huang E."/>
            <person name="Spiegel L."/>
            <person name="Gnoj L."/>
            <person name="O'Shaughnessy A."/>
            <person name="Preston R."/>
            <person name="Habermann K."/>
            <person name="Murray J."/>
            <person name="Johnson D."/>
            <person name="Rohlfing T."/>
            <person name="Nelson J."/>
            <person name="Stoneking T."/>
            <person name="Pepin K."/>
            <person name="Spieth J."/>
            <person name="Sekhon M."/>
            <person name="Armstrong J."/>
            <person name="Becker M."/>
            <person name="Belter E."/>
            <person name="Cordum H."/>
            <person name="Cordes M."/>
            <person name="Courtney L."/>
            <person name="Courtney W."/>
            <person name="Dante M."/>
            <person name="Du H."/>
            <person name="Edwards J."/>
            <person name="Fryman J."/>
            <person name="Haakensen B."/>
            <person name="Lamar E."/>
            <person name="Latreille P."/>
            <person name="Leonard S."/>
            <person name="Meyer R."/>
            <person name="Mulvaney E."/>
            <person name="Ozersky P."/>
            <person name="Riley A."/>
            <person name="Strowmatt C."/>
            <person name="Wagner-McPherson C."/>
            <person name="Wollam A."/>
            <person name="Yoakum M."/>
            <person name="Bell M."/>
            <person name="Dedhia N."/>
            <person name="Parnell L."/>
            <person name="Shah R."/>
            <person name="Rodriguez M."/>
            <person name="Hoon See L."/>
            <person name="Vil D."/>
            <person name="Baker J."/>
            <person name="Kirchoff K."/>
            <person name="Toth K."/>
            <person name="King L."/>
            <person name="Bahret A."/>
            <person name="Miller B."/>
            <person name="Marra M.A."/>
            <person name="Martienssen R."/>
            <person name="McCombie W.R."/>
            <person name="Wilson R.K."/>
            <person name="Murphy G."/>
            <person name="Bancroft I."/>
            <person name="Volckaert G."/>
            <person name="Wambutt R."/>
            <person name="Duesterhoeft A."/>
            <person name="Stiekema W."/>
            <person name="Pohl T."/>
            <person name="Entian K.-D."/>
            <person name="Terryn N."/>
            <person name="Hartley N."/>
            <person name="Bent E."/>
            <person name="Johnson S."/>
            <person name="Langham S.-A."/>
            <person name="McCullagh B."/>
            <person name="Robben J."/>
            <person name="Grymonprez B."/>
            <person name="Zimmermann W."/>
            <person name="Ramsperger U."/>
            <person name="Wedler H."/>
            <person name="Balke K."/>
            <person name="Wedler E."/>
            <person name="Peters S."/>
            <person name="van Staveren M."/>
            <person name="Dirkse W."/>
            <person name="Mooijman P."/>
            <person name="Klein Lankhorst R."/>
            <person name="Weitzenegger T."/>
            <person name="Bothe G."/>
            <person name="Rose M."/>
            <person name="Hauf J."/>
            <person name="Berneiser S."/>
            <person name="Hempel S."/>
            <person name="Feldpausch M."/>
            <person name="Lamberth S."/>
            <person name="Villarroel R."/>
            <person name="Gielen J."/>
            <person name="Ardiles W."/>
            <person name="Bents O."/>
            <person name="Lemcke K."/>
            <person name="Kolesov G."/>
            <person name="Mayer K.F.X."/>
            <person name="Rudd S."/>
            <person name="Schoof H."/>
            <person name="Schueller C."/>
            <person name="Zaccaria P."/>
            <person name="Mewes H.-W."/>
            <person name="Bevan M."/>
            <person name="Fransz P.F."/>
        </authorList>
    </citation>
    <scope>NUCLEOTIDE SEQUENCE [LARGE SCALE GENOMIC DNA]</scope>
    <source>
        <strain>cv. Columbia</strain>
    </source>
</reference>
<reference key="2">
    <citation type="journal article" date="2017" name="Plant J.">
        <title>Araport11: a complete reannotation of the Arabidopsis thaliana reference genome.</title>
        <authorList>
            <person name="Cheng C.Y."/>
            <person name="Krishnakumar V."/>
            <person name="Chan A.P."/>
            <person name="Thibaud-Nissen F."/>
            <person name="Schobel S."/>
            <person name="Town C.D."/>
        </authorList>
    </citation>
    <scope>GENOME REANNOTATION</scope>
    <source>
        <strain>cv. Columbia</strain>
    </source>
</reference>
<reference key="3">
    <citation type="journal article" date="2003" name="Science">
        <title>Empirical analysis of transcriptional activity in the Arabidopsis genome.</title>
        <authorList>
            <person name="Yamada K."/>
            <person name="Lim J."/>
            <person name="Dale J.M."/>
            <person name="Chen H."/>
            <person name="Shinn P."/>
            <person name="Palm C.J."/>
            <person name="Southwick A.M."/>
            <person name="Wu H.C."/>
            <person name="Kim C.J."/>
            <person name="Nguyen M."/>
            <person name="Pham P.K."/>
            <person name="Cheuk R.F."/>
            <person name="Karlin-Newmann G."/>
            <person name="Liu S.X."/>
            <person name="Lam B."/>
            <person name="Sakano H."/>
            <person name="Wu T."/>
            <person name="Yu G."/>
            <person name="Miranda M."/>
            <person name="Quach H.L."/>
            <person name="Tripp M."/>
            <person name="Chang C.H."/>
            <person name="Lee J.M."/>
            <person name="Toriumi M.J."/>
            <person name="Chan M.M."/>
            <person name="Tang C.C."/>
            <person name="Onodera C.S."/>
            <person name="Deng J.M."/>
            <person name="Akiyama K."/>
            <person name="Ansari Y."/>
            <person name="Arakawa T."/>
            <person name="Banh J."/>
            <person name="Banno F."/>
            <person name="Bowser L."/>
            <person name="Brooks S.Y."/>
            <person name="Carninci P."/>
            <person name="Chao Q."/>
            <person name="Choy N."/>
            <person name="Enju A."/>
            <person name="Goldsmith A.D."/>
            <person name="Gurjal M."/>
            <person name="Hansen N.F."/>
            <person name="Hayashizaki Y."/>
            <person name="Johnson-Hopson C."/>
            <person name="Hsuan V.W."/>
            <person name="Iida K."/>
            <person name="Karnes M."/>
            <person name="Khan S."/>
            <person name="Koesema E."/>
            <person name="Ishida J."/>
            <person name="Jiang P.X."/>
            <person name="Jones T."/>
            <person name="Kawai J."/>
            <person name="Kamiya A."/>
            <person name="Meyers C."/>
            <person name="Nakajima M."/>
            <person name="Narusaka M."/>
            <person name="Seki M."/>
            <person name="Sakurai T."/>
            <person name="Satou M."/>
            <person name="Tamse R."/>
            <person name="Vaysberg M."/>
            <person name="Wallender E.K."/>
            <person name="Wong C."/>
            <person name="Yamamura Y."/>
            <person name="Yuan S."/>
            <person name="Shinozaki K."/>
            <person name="Davis R.W."/>
            <person name="Theologis A."/>
            <person name="Ecker J.R."/>
        </authorList>
    </citation>
    <scope>NUCLEOTIDE SEQUENCE [LARGE SCALE MRNA]</scope>
    <source>
        <strain>cv. Columbia</strain>
    </source>
</reference>
<reference key="4">
    <citation type="journal article" date="2008" name="Plant Cell">
        <title>Two distinct interacting classes of nuclear envelope-associated coiled-coil proteins are required for the tissue-specific nuclear envelope targeting of Arabidopsis RanGAP.</title>
        <authorList>
            <person name="Zhao Q."/>
            <person name="Brkljacic J."/>
            <person name="Meier I."/>
        </authorList>
    </citation>
    <scope>PROTEIN SEQUENCE OF 285-296; 351-386 AND 645-663</scope>
    <scope>FUNCTION</scope>
    <scope>DIMERIZATION</scope>
    <scope>INTERACTION WITH WIP2; WPP1; WPP2; RANGAP1 AND RANGAP2</scope>
    <scope>SUBCELLULAR LOCATION</scope>
    <scope>TISSUE SPECIFICITY</scope>
</reference>
<reference key="5">
    <citation type="journal article" date="2009" name="Plant Physiol.">
        <title>WPP-domain proteins mimic the activity of the HSC70-1 chaperone in preventing mistargeting of RanGAP1-anchoring protein WIT1.</title>
        <authorList>
            <person name="Brkljacic J."/>
            <person name="Zhao Q."/>
            <person name="Meier I."/>
        </authorList>
    </citation>
    <scope>INTERACTION WITH WPP1; WPP2 AND HSP70-1</scope>
    <scope>SUBCELLULAR LOCATION</scope>
</reference>
<reference key="6">
    <citation type="journal article" date="2013" name="Curr. Biol.">
        <title>Myosin XI-i links the nuclear membrane to the cytoskeleton to control nuclear movement and shape in Arabidopsis.</title>
        <authorList>
            <person name="Tamura K."/>
            <person name="Iwabuchi K."/>
            <person name="Fukao Y."/>
            <person name="Kondo M."/>
            <person name="Okamoto K."/>
            <person name="Ueda H."/>
            <person name="Nishimura M."/>
            <person name="Hara-Nishimura I."/>
        </authorList>
    </citation>
    <scope>INTERACTION WITH KAKU1 AND WIP1</scope>
</reference>
<reference key="7">
    <citation type="journal article" date="2015" name="J. Exp. Bot.">
        <title>The plant nuclear envelope as a multifunctional platform LINCed by SUN and KASH.</title>
        <authorList>
            <person name="Zhou X."/>
            <person name="Graumann K."/>
            <person name="Meier I."/>
        </authorList>
    </citation>
    <scope>REVIEW</scope>
</reference>
<reference key="8">
    <citation type="journal article" date="2015" name="Nucleus">
        <title>Plant nuclear shape is independently determined by the SUN-WIP-WIT2-myosin XI-i complex and CRWN1.</title>
        <authorList>
            <person name="Zhou X."/>
            <person name="Groves N.R."/>
            <person name="Meier I."/>
        </authorList>
    </citation>
    <scope>INTERACTION WITH KAKU1</scope>
</reference>
<protein>
    <recommendedName>
        <fullName>WPP domain-interacting tail-anchored protein 1</fullName>
    </recommendedName>
</protein>
<feature type="chain" id="PRO_0000347194" description="WPP domain-interacting tail-anchored protein 1">
    <location>
        <begin position="1"/>
        <end position="703"/>
    </location>
</feature>
<feature type="transmembrane region" description="Helical" evidence="1">
    <location>
        <begin position="679"/>
        <end position="699"/>
    </location>
</feature>
<feature type="region of interest" description="Disordered" evidence="2">
    <location>
        <begin position="1"/>
        <end position="27"/>
    </location>
</feature>
<feature type="region of interest" description="Disordered" evidence="2">
    <location>
        <begin position="86"/>
        <end position="107"/>
    </location>
</feature>
<feature type="region of interest" description="Disordered" evidence="2">
    <location>
        <begin position="189"/>
        <end position="208"/>
    </location>
</feature>
<feature type="coiled-coil region" evidence="1">
    <location>
        <begin position="118"/>
        <end position="183"/>
    </location>
</feature>
<feature type="coiled-coil region" evidence="1">
    <location>
        <begin position="236"/>
        <end position="265"/>
    </location>
</feature>
<feature type="coiled-coil region" evidence="1">
    <location>
        <begin position="318"/>
        <end position="461"/>
    </location>
</feature>
<feature type="coiled-coil region" evidence="1">
    <location>
        <begin position="500"/>
        <end position="604"/>
    </location>
</feature>
<feature type="compositionally biased region" description="Basic and acidic residues" evidence="2">
    <location>
        <begin position="1"/>
        <end position="12"/>
    </location>
</feature>
<feature type="compositionally biased region" description="Acidic residues" evidence="2">
    <location>
        <begin position="92"/>
        <end position="107"/>
    </location>
</feature>
<feature type="compositionally biased region" description="Polar residues" evidence="2">
    <location>
        <begin position="198"/>
        <end position="208"/>
    </location>
</feature>
<feature type="sequence conflict" description="In Ref. 3; AAN15713/AAM96967." evidence="7" ref="3">
    <original>M</original>
    <variation>I</variation>
    <location>
        <position position="235"/>
    </location>
</feature>
<accession>Q8L7E5</accession>
<accession>Q9LFL8</accession>
<dbReference type="EMBL" id="AL360314">
    <property type="protein sequence ID" value="CAB96674.1"/>
    <property type="status" value="ALT_SEQ"/>
    <property type="molecule type" value="Genomic_DNA"/>
</dbReference>
<dbReference type="EMBL" id="CP002688">
    <property type="protein sequence ID" value="AED91671.1"/>
    <property type="molecule type" value="Genomic_DNA"/>
</dbReference>
<dbReference type="EMBL" id="AY136301">
    <property type="protein sequence ID" value="AAM96967.1"/>
    <property type="molecule type" value="mRNA"/>
</dbReference>
<dbReference type="EMBL" id="BT000394">
    <property type="protein sequence ID" value="AAN15713.1"/>
    <property type="molecule type" value="mRNA"/>
</dbReference>
<dbReference type="RefSeq" id="NP_196700.2">
    <property type="nucleotide sequence ID" value="NM_121177.4"/>
</dbReference>
<dbReference type="SMR" id="Q8L7E5"/>
<dbReference type="BioGRID" id="16288">
    <property type="interactions" value="9"/>
</dbReference>
<dbReference type="FunCoup" id="Q8L7E5">
    <property type="interactions" value="1273"/>
</dbReference>
<dbReference type="IntAct" id="Q8L7E5">
    <property type="interactions" value="6"/>
</dbReference>
<dbReference type="STRING" id="3702.Q8L7E5"/>
<dbReference type="iPTMnet" id="Q8L7E5"/>
<dbReference type="PaxDb" id="3702-AT5G11390.1"/>
<dbReference type="ProteomicsDB" id="243077"/>
<dbReference type="EnsemblPlants" id="AT5G11390.1">
    <property type="protein sequence ID" value="AT5G11390.1"/>
    <property type="gene ID" value="AT5G11390"/>
</dbReference>
<dbReference type="GeneID" id="831010"/>
<dbReference type="Gramene" id="AT5G11390.1">
    <property type="protein sequence ID" value="AT5G11390.1"/>
    <property type="gene ID" value="AT5G11390"/>
</dbReference>
<dbReference type="KEGG" id="ath:AT5G11390"/>
<dbReference type="Araport" id="AT5G11390"/>
<dbReference type="TAIR" id="AT5G11390">
    <property type="gene designation" value="WIT1"/>
</dbReference>
<dbReference type="eggNOG" id="ENOG502QPXD">
    <property type="taxonomic scope" value="Eukaryota"/>
</dbReference>
<dbReference type="HOGENOM" id="CLU_023491_0_0_1"/>
<dbReference type="InParanoid" id="Q8L7E5"/>
<dbReference type="OMA" id="TMHVATR"/>
<dbReference type="PhylomeDB" id="Q8L7E5"/>
<dbReference type="PRO" id="PR:Q8L7E5"/>
<dbReference type="Proteomes" id="UP000006548">
    <property type="component" value="Chromosome 5"/>
</dbReference>
<dbReference type="ExpressionAtlas" id="Q8L7E5">
    <property type="expression patterns" value="baseline and differential"/>
</dbReference>
<dbReference type="GO" id="GO:0005635">
    <property type="term" value="C:nuclear envelope"/>
    <property type="evidence" value="ECO:0000314"/>
    <property type="project" value="TAIR"/>
</dbReference>
<dbReference type="GO" id="GO:0031965">
    <property type="term" value="C:nuclear membrane"/>
    <property type="evidence" value="ECO:0007669"/>
    <property type="project" value="UniProtKB-SubCell"/>
</dbReference>
<dbReference type="InterPro" id="IPR039976">
    <property type="entry name" value="WIT1/WIT2"/>
</dbReference>
<dbReference type="PANTHER" id="PTHR35705">
    <property type="entry name" value="WPP DOMAIN-INTERACTING TAIL-ANCHORED PROTEIN 1"/>
    <property type="match status" value="1"/>
</dbReference>
<dbReference type="PANTHER" id="PTHR35705:SF1">
    <property type="entry name" value="WPP DOMAIN-INTERACTING TAIL-ANCHORED PROTEIN 1"/>
    <property type="match status" value="1"/>
</dbReference>
<dbReference type="SUPFAM" id="SSF57997">
    <property type="entry name" value="Tropomyosin"/>
    <property type="match status" value="1"/>
</dbReference>
<evidence type="ECO:0000255" key="1"/>
<evidence type="ECO:0000256" key="2">
    <source>
        <dbReference type="SAM" id="MobiDB-lite"/>
    </source>
</evidence>
<evidence type="ECO:0000269" key="3">
    <source>
    </source>
</evidence>
<evidence type="ECO:0000269" key="4">
    <source>
    </source>
</evidence>
<evidence type="ECO:0000269" key="5">
    <source>
    </source>
</evidence>
<evidence type="ECO:0000269" key="6">
    <source>
    </source>
</evidence>
<evidence type="ECO:0000305" key="7"/>
<keyword id="KW-0175">Coiled coil</keyword>
<keyword id="KW-0903">Direct protein sequencing</keyword>
<keyword id="KW-0472">Membrane</keyword>
<keyword id="KW-0539">Nucleus</keyword>
<keyword id="KW-1185">Reference proteome</keyword>
<keyword id="KW-0812">Transmembrane</keyword>
<keyword id="KW-1133">Transmembrane helix</keyword>
<name>WIT1_ARATH</name>
<proteinExistence type="evidence at protein level"/>